<keyword id="KW-0002">3D-structure</keyword>
<keyword id="KW-0903">Direct protein sequencing</keyword>
<keyword id="KW-1185">Reference proteome</keyword>
<keyword id="KW-0346">Stress response</keyword>
<organism>
    <name type="scientific">Escherichia coli (strain K12)</name>
    <dbReference type="NCBI Taxonomy" id="83333"/>
    <lineage>
        <taxon>Bacteria</taxon>
        <taxon>Pseudomonadati</taxon>
        <taxon>Pseudomonadota</taxon>
        <taxon>Gammaproteobacteria</taxon>
        <taxon>Enterobacterales</taxon>
        <taxon>Enterobacteriaceae</taxon>
        <taxon>Escherichia</taxon>
    </lineage>
</organism>
<sequence>MDLSQLTPRRPYLLRAFYEWLLDNQLTPHLVVDVTLPGVQVPMEYARDGQIVLNIAPRAVGNLELANDEVRFNARFGGIPRQVSVPLAAVLAIYARENGAGTMFEPEAAYDEDTSIMNDEEASADNETVMSVIDGDKPDHDDDTHPDDEPPQPPRGGRPALRVVK</sequence>
<reference key="1">
    <citation type="journal article" date="1991" name="Gene">
        <title>Null mutation in the stringent starvation protein of Escherichia coli disrupts lytic development of bacteriophage P1.</title>
        <authorList>
            <person name="Williams M.D."/>
            <person name="Fuchs J.A."/>
            <person name="Flickinger M.C."/>
        </authorList>
    </citation>
    <scope>NUCLEOTIDE SEQUENCE [GENOMIC DNA]</scope>
    <source>
        <strain>K12</strain>
    </source>
</reference>
<reference key="2">
    <citation type="journal article" date="1997" name="Science">
        <title>The complete genome sequence of Escherichia coli K-12.</title>
        <authorList>
            <person name="Blattner F.R."/>
            <person name="Plunkett G. III"/>
            <person name="Bloch C.A."/>
            <person name="Perna N.T."/>
            <person name="Burland V."/>
            <person name="Riley M."/>
            <person name="Collado-Vides J."/>
            <person name="Glasner J.D."/>
            <person name="Rode C.K."/>
            <person name="Mayhew G.F."/>
            <person name="Gregor J."/>
            <person name="Davis N.W."/>
            <person name="Kirkpatrick H.A."/>
            <person name="Goeden M.A."/>
            <person name="Rose D.J."/>
            <person name="Mau B."/>
            <person name="Shao Y."/>
        </authorList>
    </citation>
    <scope>NUCLEOTIDE SEQUENCE [LARGE SCALE GENOMIC DNA]</scope>
    <source>
        <strain>K12 / MG1655 / ATCC 47076</strain>
    </source>
</reference>
<reference key="3">
    <citation type="journal article" date="2006" name="Mol. Syst. Biol.">
        <title>Highly accurate genome sequences of Escherichia coli K-12 strains MG1655 and W3110.</title>
        <authorList>
            <person name="Hayashi K."/>
            <person name="Morooka N."/>
            <person name="Yamamoto Y."/>
            <person name="Fujita K."/>
            <person name="Isono K."/>
            <person name="Choi S."/>
            <person name="Ohtsubo E."/>
            <person name="Baba T."/>
            <person name="Wanner B.L."/>
            <person name="Mori H."/>
            <person name="Horiuchi T."/>
        </authorList>
    </citation>
    <scope>NUCLEOTIDE SEQUENCE [LARGE SCALE GENOMIC DNA]</scope>
    <source>
        <strain>K12 / W3110 / ATCC 27325 / DSM 5911</strain>
    </source>
</reference>
<reference key="4">
    <citation type="journal article" date="1987" name="Nucleic Acids Res.">
        <title>Structure of the gene for the stringent starvation protein of Escherichia coli.</title>
        <authorList>
            <person name="Serizawa H."/>
            <person name="Fukuda R."/>
        </authorList>
    </citation>
    <scope>NUCLEOTIDE SEQUENCE [GENOMIC DNA] OF 1-139</scope>
</reference>
<reference key="5">
    <citation type="journal article" date="2000" name="Science">
        <title>A specificity-enhancing factor for the ClpXP degradation machine.</title>
        <authorList>
            <person name="Levchenko I."/>
            <person name="Seidel M."/>
            <person name="Sauer R.T."/>
            <person name="Baker T.A."/>
        </authorList>
    </citation>
    <scope>PROTEIN SEQUENCE OF N-TERMINUS</scope>
    <scope>FUNCTION</scope>
    <scope>INTERACTION WITH SSRA-TAGGED PROTEINS</scope>
    <scope>DISRUPTION PHENOTYPE</scope>
</reference>
<reference key="6">
    <citation type="journal article" date="1994" name="Mol. Microbiol.">
        <title>Starvation-induced expression of SspA and SspB: the effects of a null mutation in sspA on Escherichia coli protein synthesis and survival during growth and prolonged starvation.</title>
        <authorList>
            <person name="Williams M.D."/>
            <person name="Ouyang T.X."/>
            <person name="Flickinger M.C."/>
        </authorList>
    </citation>
    <scope>CHARACTERIZATION</scope>
    <scope>INDUCTION</scope>
</reference>
<reference key="7">
    <citation type="journal article" date="1997" name="Electrophoresis">
        <title>Escherichia coli proteome analysis using the gene-protein database.</title>
        <authorList>
            <person name="VanBogelen R.A."/>
            <person name="Abshire K.Z."/>
            <person name="Moldover B."/>
            <person name="Olson E.R."/>
            <person name="Neidhardt F.C."/>
        </authorList>
    </citation>
    <scope>IDENTIFICATION BY 2D-GEL</scope>
</reference>
<reference key="8">
    <citation type="journal article" date="2004" name="Genes Dev.">
        <title>Modulating substrate choice: the SspB adaptor delivers a regulator of the extracytoplasmic-stress response to the AAA+ protease ClpXP for degradation.</title>
        <authorList>
            <person name="Flynn J.M."/>
            <person name="Levchenko I."/>
            <person name="Sauer R.T."/>
            <person name="Baker T.A."/>
        </authorList>
    </citation>
    <scope>FUNCTION</scope>
    <scope>INTERACTION WITH RPOE AND RSEA</scope>
    <scope>INTERACTION WITH SSRA TAG</scope>
    <scope>DISRUPTION PHENOTYPE</scope>
</reference>
<reference key="9">
    <citation type="journal article" date="2003" name="Mol. Cell">
        <title>Structural basis of degradation signal recognition by SspB, a specificity-enhancing factor for the ClpXP proteolytic machine.</title>
        <authorList>
            <person name="Song H.K."/>
            <person name="Eck M.J."/>
        </authorList>
    </citation>
    <scope>X-RAY CRYSTALLOGRAPHY (2.2 ANGSTROMS) OF 4-111 IN COMPLEX WITH SSRA TAG</scope>
    <scope>FUNCTION IN ACTIVATING CLPX</scope>
    <scope>SUBUNIT</scope>
    <scope>DOMAIN</scope>
</reference>
<reference key="10">
    <citation type="journal article" date="2005" name="Nat. Struct. Mol. Biol.">
        <title>Versatile modes of peptide recognition by the AAA+ adaptor protein SspB.</title>
        <authorList>
            <person name="Levchenko I."/>
            <person name="Grant R.A."/>
            <person name="Flynn J.M."/>
            <person name="Sauer R.T."/>
            <person name="Baker T.A."/>
        </authorList>
    </citation>
    <scope>X-RAY CRYSTALLOGRAPHY (1.8 ANGSTROMS) OF 1-118 IN COMPLEX WITH RSEA N-TERMINAL FRAGMENT</scope>
    <scope>SUBUNIT</scope>
    <scope>MUTAGENESIS OF VAL-52; ALA-59 AND ALA-74</scope>
</reference>
<reference key="11">
    <citation type="journal article" date="2007" name="J. Mol. Biol.">
        <title>Structural basis of SspB-tail recognition by the zinc binding domain of ClpX.</title>
        <authorList>
            <person name="Park E.Y."/>
            <person name="Lee B.G."/>
            <person name="Hong S.B."/>
            <person name="Kim H.W."/>
            <person name="Jeon H."/>
            <person name="Song H.K."/>
        </authorList>
    </citation>
    <scope>X-RAY CRYSTALLOGRAPHY (1.50 ANGSTROMS) OF 159-165 IN COMPLEX WITH CLPX N-TERMINAL FRAGMENT</scope>
</reference>
<name>SSPB_ECOLI</name>
<feature type="chain" id="PRO_0000072218" description="Stringent starvation protein B">
    <location>
        <begin position="1"/>
        <end position="165"/>
    </location>
</feature>
<feature type="region of interest" description="Binds SspB">
    <location>
        <begin position="73"/>
        <end position="95"/>
    </location>
</feature>
<feature type="region of interest" description="Disordered" evidence="1">
    <location>
        <begin position="119"/>
        <end position="165"/>
    </location>
</feature>
<feature type="region of interest" description="Required for interaction with ClpX, not required for ssrA tag recognition or dimerization">
    <location>
        <begin position="128"/>
        <end position="165"/>
    </location>
</feature>
<feature type="compositionally biased region" description="Basic and acidic residues" evidence="1">
    <location>
        <begin position="134"/>
        <end position="143"/>
    </location>
</feature>
<feature type="mutagenesis site" description="No folded protein." evidence="5">
    <original>V</original>
    <variation>D</variation>
    <variation>M</variation>
    <variation>Q</variation>
    <location>
        <position position="52"/>
    </location>
</feature>
<feature type="mutagenesis site" description="2.5-fold reduction in binding of RseA, no effect on ssrA-tag binding." evidence="5">
    <original>V</original>
    <variation>I</variation>
    <location>
        <position position="52"/>
    </location>
</feature>
<feature type="mutagenesis site" description="10-fold reduction in binding of ssrA tag and RseA." evidence="5">
    <original>A</original>
    <variation>T</variation>
    <location>
        <position position="59"/>
    </location>
</feature>
<feature type="mutagenesis site" description="Severe reduction in binding of ssrA tag (40-fold) and RseA (100-fold)." evidence="5">
    <original>A</original>
    <variation>Q</variation>
    <location>
        <position position="74"/>
    </location>
</feature>
<feature type="helix" evidence="9">
    <location>
        <begin position="10"/>
        <end position="23"/>
    </location>
</feature>
<feature type="strand" evidence="9">
    <location>
        <begin position="28"/>
        <end position="33"/>
    </location>
</feature>
<feature type="helix" evidence="9">
    <location>
        <begin position="43"/>
        <end position="45"/>
    </location>
</feature>
<feature type="strand" evidence="9">
    <location>
        <begin position="50"/>
        <end position="54"/>
    </location>
</feature>
<feature type="helix" evidence="9">
    <location>
        <begin position="57"/>
        <end position="59"/>
    </location>
</feature>
<feature type="strand" evidence="9">
    <location>
        <begin position="61"/>
        <end position="65"/>
    </location>
</feature>
<feature type="strand" evidence="9">
    <location>
        <begin position="67"/>
        <end position="76"/>
    </location>
</feature>
<feature type="strand" evidence="9">
    <location>
        <begin position="79"/>
        <end position="86"/>
    </location>
</feature>
<feature type="helix" evidence="9">
    <location>
        <begin position="87"/>
        <end position="89"/>
    </location>
</feature>
<feature type="strand" evidence="9">
    <location>
        <begin position="90"/>
        <end position="95"/>
    </location>
</feature>
<feature type="turn" evidence="9">
    <location>
        <begin position="96"/>
        <end position="98"/>
    </location>
</feature>
<feature type="strand" evidence="9">
    <location>
        <begin position="101"/>
        <end position="103"/>
    </location>
</feature>
<feature type="turn" evidence="9">
    <location>
        <begin position="108"/>
        <end position="110"/>
    </location>
</feature>
<gene>
    <name type="primary">sspB</name>
    <name type="ordered locus">b3228</name>
    <name type="ordered locus">JW3197</name>
</gene>
<dbReference type="EMBL" id="M69028">
    <property type="protein sequence ID" value="AAA24650.1"/>
    <property type="molecule type" value="Genomic_DNA"/>
</dbReference>
<dbReference type="EMBL" id="U18997">
    <property type="protein sequence ID" value="AAA58030.1"/>
    <property type="molecule type" value="Genomic_DNA"/>
</dbReference>
<dbReference type="EMBL" id="U00096">
    <property type="protein sequence ID" value="AAC76260.1"/>
    <property type="molecule type" value="Genomic_DNA"/>
</dbReference>
<dbReference type="EMBL" id="AP009048">
    <property type="protein sequence ID" value="BAE77271.1"/>
    <property type="molecule type" value="Genomic_DNA"/>
</dbReference>
<dbReference type="EMBL" id="X05088">
    <property type="protein sequence ID" value="CAA28741.1"/>
    <property type="molecule type" value="Genomic_DNA"/>
</dbReference>
<dbReference type="PIR" id="JS0666">
    <property type="entry name" value="JS0666"/>
</dbReference>
<dbReference type="RefSeq" id="NP_417695.1">
    <property type="nucleotide sequence ID" value="NC_000913.3"/>
</dbReference>
<dbReference type="RefSeq" id="WP_000366129.1">
    <property type="nucleotide sequence ID" value="NZ_STEB01000012.1"/>
</dbReference>
<dbReference type="PDB" id="1OX8">
    <property type="method" value="X-ray"/>
    <property type="resolution" value="2.20 A"/>
    <property type="chains" value="A/B=5-111"/>
</dbReference>
<dbReference type="PDB" id="1OX9">
    <property type="method" value="X-ray"/>
    <property type="resolution" value="2.90 A"/>
    <property type="chains" value="A/B/C/D/E/F/G/H=4-111"/>
</dbReference>
<dbReference type="PDB" id="1YFN">
    <property type="method" value="X-ray"/>
    <property type="resolution" value="1.80 A"/>
    <property type="chains" value="A/B/C/D=1-118"/>
</dbReference>
<dbReference type="PDB" id="2DS8">
    <property type="method" value="X-ray"/>
    <property type="resolution" value="1.60 A"/>
    <property type="chains" value="P/Q=159-165"/>
</dbReference>
<dbReference type="PDB" id="8ET3">
    <property type="method" value="EM"/>
    <property type="resolution" value="3.70 A"/>
    <property type="chains" value="Y/Z=1-165"/>
</dbReference>
<dbReference type="PDBsum" id="1OX8"/>
<dbReference type="PDBsum" id="1OX9"/>
<dbReference type="PDBsum" id="1YFN"/>
<dbReference type="PDBsum" id="2DS8"/>
<dbReference type="PDBsum" id="8ET3"/>
<dbReference type="SMR" id="P0AFZ3"/>
<dbReference type="BioGRID" id="4262444">
    <property type="interactions" value="139"/>
</dbReference>
<dbReference type="BioGRID" id="849176">
    <property type="interactions" value="1"/>
</dbReference>
<dbReference type="DIP" id="DIP-29563N"/>
<dbReference type="FunCoup" id="P0AFZ3">
    <property type="interactions" value="138"/>
</dbReference>
<dbReference type="IntAct" id="P0AFZ3">
    <property type="interactions" value="31"/>
</dbReference>
<dbReference type="STRING" id="511145.b3228"/>
<dbReference type="jPOST" id="P0AFZ3"/>
<dbReference type="PaxDb" id="511145-b3228"/>
<dbReference type="EnsemblBacteria" id="AAC76260">
    <property type="protein sequence ID" value="AAC76260"/>
    <property type="gene ID" value="b3228"/>
</dbReference>
<dbReference type="GeneID" id="93778758"/>
<dbReference type="GeneID" id="944774"/>
<dbReference type="KEGG" id="ecj:JW3197"/>
<dbReference type="KEGG" id="eco:b3228"/>
<dbReference type="KEGG" id="ecoc:C3026_17565"/>
<dbReference type="PATRIC" id="fig|1411691.4.peg.3500"/>
<dbReference type="EchoBASE" id="EB0971"/>
<dbReference type="eggNOG" id="COG2969">
    <property type="taxonomic scope" value="Bacteria"/>
</dbReference>
<dbReference type="HOGENOM" id="CLU_118425_0_0_6"/>
<dbReference type="InParanoid" id="P0AFZ3"/>
<dbReference type="OMA" id="DMGNEWI"/>
<dbReference type="OrthoDB" id="9797358at2"/>
<dbReference type="PhylomeDB" id="P0AFZ3"/>
<dbReference type="BioCyc" id="EcoCyc:EG10978-MONOMER"/>
<dbReference type="EvolutionaryTrace" id="P0AFZ3"/>
<dbReference type="PRO" id="PR:P0AFZ3"/>
<dbReference type="Proteomes" id="UP000000625">
    <property type="component" value="Chromosome"/>
</dbReference>
<dbReference type="GO" id="GO:0005829">
    <property type="term" value="C:cytosol"/>
    <property type="evidence" value="ECO:0000314"/>
    <property type="project" value="EcoCyc"/>
</dbReference>
<dbReference type="GO" id="GO:0009376">
    <property type="term" value="C:HslUV protease complex"/>
    <property type="evidence" value="ECO:0000315"/>
    <property type="project" value="CAFA"/>
</dbReference>
<dbReference type="GO" id="GO:0005840">
    <property type="term" value="C:ribosome"/>
    <property type="evidence" value="ECO:0000314"/>
    <property type="project" value="EcoCyc"/>
</dbReference>
<dbReference type="GO" id="GO:0051117">
    <property type="term" value="F:ATPase binding"/>
    <property type="evidence" value="ECO:0000353"/>
    <property type="project" value="CAFA"/>
</dbReference>
<dbReference type="GO" id="GO:0060090">
    <property type="term" value="F:molecular adaptor activity"/>
    <property type="evidence" value="ECO:0000269"/>
    <property type="project" value="DisProt"/>
</dbReference>
<dbReference type="GO" id="GO:0042803">
    <property type="term" value="F:protein homodimerization activity"/>
    <property type="evidence" value="ECO:0000315"/>
    <property type="project" value="CAFA"/>
</dbReference>
<dbReference type="GO" id="GO:0003723">
    <property type="term" value="F:RNA binding"/>
    <property type="evidence" value="ECO:0000315"/>
    <property type="project" value="CAFA"/>
</dbReference>
<dbReference type="GO" id="GO:0032781">
    <property type="term" value="P:positive regulation of ATP-dependent activity"/>
    <property type="evidence" value="ECO:0000315"/>
    <property type="project" value="CAFA"/>
</dbReference>
<dbReference type="GO" id="GO:0045732">
    <property type="term" value="P:positive regulation of protein catabolic process"/>
    <property type="evidence" value="ECO:0000314"/>
    <property type="project" value="EcoCyc"/>
</dbReference>
<dbReference type="GO" id="GO:1903052">
    <property type="term" value="P:positive regulation of proteolysis involved in protein catabolic process"/>
    <property type="evidence" value="ECO:0000314"/>
    <property type="project" value="DisProt"/>
</dbReference>
<dbReference type="DisProt" id="DP00194"/>
<dbReference type="FunFam" id="2.30.30.220:FF:000001">
    <property type="entry name" value="ClpXP protease specificity-enhancing factor"/>
    <property type="match status" value="1"/>
</dbReference>
<dbReference type="Gene3D" id="2.30.30.220">
    <property type="entry name" value="SspB-like"/>
    <property type="match status" value="1"/>
</dbReference>
<dbReference type="InterPro" id="IPR007481">
    <property type="entry name" value="SspB"/>
</dbReference>
<dbReference type="InterPro" id="IPR036760">
    <property type="entry name" value="SspB-like_sf"/>
</dbReference>
<dbReference type="NCBIfam" id="NF008762">
    <property type="entry name" value="PRK11798.1-1"/>
    <property type="match status" value="1"/>
</dbReference>
<dbReference type="NCBIfam" id="NF008763">
    <property type="entry name" value="PRK11798.1-2"/>
    <property type="match status" value="1"/>
</dbReference>
<dbReference type="NCBIfam" id="NF008769">
    <property type="entry name" value="PRK11798.2-5"/>
    <property type="match status" value="1"/>
</dbReference>
<dbReference type="PANTHER" id="PTHR37486">
    <property type="entry name" value="STRINGENT STARVATION PROTEIN B"/>
    <property type="match status" value="1"/>
</dbReference>
<dbReference type="PANTHER" id="PTHR37486:SF1">
    <property type="entry name" value="STRINGENT STARVATION PROTEIN B"/>
    <property type="match status" value="1"/>
</dbReference>
<dbReference type="Pfam" id="PF04386">
    <property type="entry name" value="SspB"/>
    <property type="match status" value="1"/>
</dbReference>
<dbReference type="PIRSF" id="PIRSF005276">
    <property type="entry name" value="SspB"/>
    <property type="match status" value="1"/>
</dbReference>
<dbReference type="SUPFAM" id="SSF101738">
    <property type="entry name" value="SspB-like"/>
    <property type="match status" value="1"/>
</dbReference>
<evidence type="ECO:0000256" key="1">
    <source>
        <dbReference type="SAM" id="MobiDB-lite"/>
    </source>
</evidence>
<evidence type="ECO:0000269" key="2">
    <source>
    </source>
</evidence>
<evidence type="ECO:0000269" key="3">
    <source>
    </source>
</evidence>
<evidence type="ECO:0000269" key="4">
    <source>
    </source>
</evidence>
<evidence type="ECO:0000269" key="5">
    <source>
    </source>
</evidence>
<evidence type="ECO:0000269" key="6">
    <source>
    </source>
</evidence>
<evidence type="ECO:0000269" key="7">
    <source>
    </source>
</evidence>
<evidence type="ECO:0000305" key="8"/>
<evidence type="ECO:0007829" key="9">
    <source>
        <dbReference type="PDB" id="1YFN"/>
    </source>
</evidence>
<comment type="function">
    <text>Enhances recognition of ssrA-tagged proteins by the ClpX-ClpP protease; the ssrA degradation tag (AANDENYALAA) is added trans-translationally to proteins that are stalled on the ribosome, freeing the ribosome and targeting stalled peptides for degradation. SspB activates the ATPase activity of ClpX. Seems to act in concert with SspA in the regulation of several proteins during exponential and stationary-phase growth.</text>
</comment>
<comment type="function">
    <text>Also stimulates degradation of the N-terminus of RseA (residues 1-108, alone or in complex with sigma-E) by ClpX-ClpP in a non-ssrA-mediated fashion.</text>
</comment>
<comment type="subunit">
    <text evidence="2 3 4 5 6">Homodimer. Binds 1 ssrA-tag per monomer; if the first Asn residue of the ssrA tag is mutated to Ala, SspB no longer binds the protein or stimulates ClpX-ClpP degradation (PubMed:11009422). Binds the N-terminus (residues 1-108) of RseA with and without sigma-E (PubMed:15371343); although ssrA and the N-terminal fragment of RseA both bind to SspB competitively they bind in opposite directions in its peptide-binding groove.</text>
</comment>
<comment type="induction">
    <text evidence="7">By amino acid starvation.</text>
</comment>
<comment type="disruption phenotype">
    <text evidence="2 4">Decreased degradation of ssrA-tagged proteins by ClpX-ClpP, no effect on degradation by ClpA-ClpP protease. Delayed and decreased induction of the extracytoplasmic-stress response.</text>
</comment>
<comment type="similarity">
    <text evidence="8">Belongs to the SspB family.</text>
</comment>
<proteinExistence type="evidence at protein level"/>
<accession>P0AFZ3</accession>
<accession>P25663</accession>
<accession>Q2M8Y5</accession>
<protein>
    <recommendedName>
        <fullName>Stringent starvation protein B</fullName>
    </recommendedName>
    <alternativeName>
        <fullName>Adapter protein SspB</fullName>
    </alternativeName>
    <alternativeName>
        <fullName>Specificity-enhancing factor SspB</fullName>
    </alternativeName>
</protein>